<gene>
    <name evidence="1" type="primary">engB</name>
    <name type="ordered locus">EcHS_A4089</name>
</gene>
<dbReference type="EMBL" id="CP000802">
    <property type="protein sequence ID" value="ABV08270.1"/>
    <property type="molecule type" value="Genomic_DNA"/>
</dbReference>
<dbReference type="SMR" id="A8A6W6"/>
<dbReference type="KEGG" id="ecx:EcHS_A4089"/>
<dbReference type="HOGENOM" id="CLU_033732_1_2_6"/>
<dbReference type="GO" id="GO:0005829">
    <property type="term" value="C:cytosol"/>
    <property type="evidence" value="ECO:0007669"/>
    <property type="project" value="TreeGrafter"/>
</dbReference>
<dbReference type="GO" id="GO:0005525">
    <property type="term" value="F:GTP binding"/>
    <property type="evidence" value="ECO:0007669"/>
    <property type="project" value="UniProtKB-UniRule"/>
</dbReference>
<dbReference type="GO" id="GO:0046872">
    <property type="term" value="F:metal ion binding"/>
    <property type="evidence" value="ECO:0007669"/>
    <property type="project" value="UniProtKB-KW"/>
</dbReference>
<dbReference type="GO" id="GO:0000917">
    <property type="term" value="P:division septum assembly"/>
    <property type="evidence" value="ECO:0007669"/>
    <property type="project" value="UniProtKB-KW"/>
</dbReference>
<dbReference type="CDD" id="cd01876">
    <property type="entry name" value="YihA_EngB"/>
    <property type="match status" value="1"/>
</dbReference>
<dbReference type="FunFam" id="3.40.50.300:FF:000098">
    <property type="entry name" value="Probable GTP-binding protein EngB"/>
    <property type="match status" value="1"/>
</dbReference>
<dbReference type="Gene3D" id="3.40.50.300">
    <property type="entry name" value="P-loop containing nucleotide triphosphate hydrolases"/>
    <property type="match status" value="1"/>
</dbReference>
<dbReference type="HAMAP" id="MF_00321">
    <property type="entry name" value="GTPase_EngB"/>
    <property type="match status" value="1"/>
</dbReference>
<dbReference type="InterPro" id="IPR030393">
    <property type="entry name" value="G_ENGB_dom"/>
</dbReference>
<dbReference type="InterPro" id="IPR006073">
    <property type="entry name" value="GTP-bd"/>
</dbReference>
<dbReference type="InterPro" id="IPR019987">
    <property type="entry name" value="GTP-bd_ribosome_bio_YsxC"/>
</dbReference>
<dbReference type="InterPro" id="IPR027417">
    <property type="entry name" value="P-loop_NTPase"/>
</dbReference>
<dbReference type="NCBIfam" id="TIGR03598">
    <property type="entry name" value="GTPase_YsxC"/>
    <property type="match status" value="1"/>
</dbReference>
<dbReference type="PANTHER" id="PTHR11649:SF13">
    <property type="entry name" value="ENGB-TYPE G DOMAIN-CONTAINING PROTEIN"/>
    <property type="match status" value="1"/>
</dbReference>
<dbReference type="PANTHER" id="PTHR11649">
    <property type="entry name" value="MSS1/TRME-RELATED GTP-BINDING PROTEIN"/>
    <property type="match status" value="1"/>
</dbReference>
<dbReference type="Pfam" id="PF01926">
    <property type="entry name" value="MMR_HSR1"/>
    <property type="match status" value="1"/>
</dbReference>
<dbReference type="SUPFAM" id="SSF52540">
    <property type="entry name" value="P-loop containing nucleoside triphosphate hydrolases"/>
    <property type="match status" value="1"/>
</dbReference>
<dbReference type="PROSITE" id="PS51706">
    <property type="entry name" value="G_ENGB"/>
    <property type="match status" value="1"/>
</dbReference>
<keyword id="KW-0131">Cell cycle</keyword>
<keyword id="KW-0132">Cell division</keyword>
<keyword id="KW-0342">GTP-binding</keyword>
<keyword id="KW-0460">Magnesium</keyword>
<keyword id="KW-0479">Metal-binding</keyword>
<keyword id="KW-0547">Nucleotide-binding</keyword>
<keyword id="KW-0717">Septation</keyword>
<sequence>MTNLNYQQTHFVMSAPDIRHLPSDTGIEVAFAGRSNAGKSSALNTLTNQKSLARTSKTPGRTQLINLFEVADGKRLVDLPGYGYAEVPEEMKRKWQRALGEYLEKRQSLQGLVVLMDIRHPLKDLDQQMIEWAVDSNIAVLVLLTKADKLASGARKAQLNMVREAVLAFNGDVQVETFSSLKKQGVDKLRQKLDTWFSEMQPVEETQDGE</sequence>
<accession>A8A6W6</accession>
<reference key="1">
    <citation type="journal article" date="2008" name="J. Bacteriol.">
        <title>The pangenome structure of Escherichia coli: comparative genomic analysis of E. coli commensal and pathogenic isolates.</title>
        <authorList>
            <person name="Rasko D.A."/>
            <person name="Rosovitz M.J."/>
            <person name="Myers G.S.A."/>
            <person name="Mongodin E.F."/>
            <person name="Fricke W.F."/>
            <person name="Gajer P."/>
            <person name="Crabtree J."/>
            <person name="Sebaihia M."/>
            <person name="Thomson N.R."/>
            <person name="Chaudhuri R."/>
            <person name="Henderson I.R."/>
            <person name="Sperandio V."/>
            <person name="Ravel J."/>
        </authorList>
    </citation>
    <scope>NUCLEOTIDE SEQUENCE [LARGE SCALE GENOMIC DNA]</scope>
    <source>
        <strain>HS</strain>
    </source>
</reference>
<name>ENGB_ECOHS</name>
<proteinExistence type="inferred from homology"/>
<evidence type="ECO:0000255" key="1">
    <source>
        <dbReference type="HAMAP-Rule" id="MF_00321"/>
    </source>
</evidence>
<organism>
    <name type="scientific">Escherichia coli O9:H4 (strain HS)</name>
    <dbReference type="NCBI Taxonomy" id="331112"/>
    <lineage>
        <taxon>Bacteria</taxon>
        <taxon>Pseudomonadati</taxon>
        <taxon>Pseudomonadota</taxon>
        <taxon>Gammaproteobacteria</taxon>
        <taxon>Enterobacterales</taxon>
        <taxon>Enterobacteriaceae</taxon>
        <taxon>Escherichia</taxon>
    </lineage>
</organism>
<feature type="chain" id="PRO_1000059471" description="Probable GTP-binding protein EngB">
    <location>
        <begin position="1"/>
        <end position="210"/>
    </location>
</feature>
<feature type="domain" description="EngB-type G" evidence="1">
    <location>
        <begin position="25"/>
        <end position="199"/>
    </location>
</feature>
<feature type="binding site" evidence="1">
    <location>
        <begin position="33"/>
        <end position="40"/>
    </location>
    <ligand>
        <name>GTP</name>
        <dbReference type="ChEBI" id="CHEBI:37565"/>
    </ligand>
</feature>
<feature type="binding site" evidence="1">
    <location>
        <position position="40"/>
    </location>
    <ligand>
        <name>Mg(2+)</name>
        <dbReference type="ChEBI" id="CHEBI:18420"/>
    </ligand>
</feature>
<feature type="binding site" evidence="1">
    <location>
        <begin position="60"/>
        <end position="64"/>
    </location>
    <ligand>
        <name>GTP</name>
        <dbReference type="ChEBI" id="CHEBI:37565"/>
    </ligand>
</feature>
<feature type="binding site" evidence="1">
    <location>
        <position position="62"/>
    </location>
    <ligand>
        <name>Mg(2+)</name>
        <dbReference type="ChEBI" id="CHEBI:18420"/>
    </ligand>
</feature>
<feature type="binding site" evidence="1">
    <location>
        <begin position="78"/>
        <end position="81"/>
    </location>
    <ligand>
        <name>GTP</name>
        <dbReference type="ChEBI" id="CHEBI:37565"/>
    </ligand>
</feature>
<feature type="binding site" evidence="1">
    <location>
        <begin position="145"/>
        <end position="148"/>
    </location>
    <ligand>
        <name>GTP</name>
        <dbReference type="ChEBI" id="CHEBI:37565"/>
    </ligand>
</feature>
<feature type="binding site" evidence="1">
    <location>
        <begin position="178"/>
        <end position="180"/>
    </location>
    <ligand>
        <name>GTP</name>
        <dbReference type="ChEBI" id="CHEBI:37565"/>
    </ligand>
</feature>
<protein>
    <recommendedName>
        <fullName evidence="1">Probable GTP-binding protein EngB</fullName>
    </recommendedName>
</protein>
<comment type="function">
    <text evidence="1">Necessary for normal cell division and for the maintenance of normal septation.</text>
</comment>
<comment type="cofactor">
    <cofactor evidence="1">
        <name>Mg(2+)</name>
        <dbReference type="ChEBI" id="CHEBI:18420"/>
    </cofactor>
</comment>
<comment type="similarity">
    <text evidence="1">Belongs to the TRAFAC class TrmE-Era-EngA-EngB-Septin-like GTPase superfamily. EngB GTPase family.</text>
</comment>